<gene>
    <name type="primary">yfkQ</name>
    <name type="ordered locus">BSU07790</name>
</gene>
<organism>
    <name type="scientific">Bacillus subtilis (strain 168)</name>
    <dbReference type="NCBI Taxonomy" id="224308"/>
    <lineage>
        <taxon>Bacteria</taxon>
        <taxon>Bacillati</taxon>
        <taxon>Bacillota</taxon>
        <taxon>Bacilli</taxon>
        <taxon>Bacillales</taxon>
        <taxon>Bacillaceae</taxon>
        <taxon>Bacillus</taxon>
    </lineage>
</organism>
<accession>O34486</accession>
<sequence>MNKRDKALQLIKELEDNQDRPISPNLKENLENLTLLTEGCSDIVFRQFDFGNGLCGFIVYIEGIVKSEHIQDHALRPFLMHLTDQIDEHEEALQNTLSISSVALETSMSKVAASIIEGNAVLFADGHSKGLILNIKGGQRRSIEEPITESTIRGSREGFTESLRVNTALVRFRVKTFQLKMISFKIGTKTKTDVVLAYIDGLADPKVIDKAKKRIKKIKIDAVLESGYIEEFIEDDTYSPFPQLQYTERPDTVAAQLLEGRFAIFTDNTPFVLTGPITFWQLMQASEDYYERYLMSNLIRWLRYMFLFVALYLPAIYVAVITYHQDLMPTNLMFSVASAREPIPFPAIIEALIMEISFEALREAGVRLPKTIGQTVSILGALVIGTAAVEAGIVSAPMVIIVSLTGIASFTIPRFNLAISIRMLRFPLMFLASIFGIFGIMLGTIILVLHLCKLQSFGIPYLSGISPFKRDEVKDIFVRAPWWTMTRRPGTYSRGNGQKGAKREDPKDEENNI</sequence>
<feature type="chain" id="PRO_0000164020" description="Uncharacterized membrane protein YfkQ">
    <location>
        <begin position="1"/>
        <end position="513"/>
    </location>
</feature>
<feature type="transmembrane region" description="Helical" evidence="1">
    <location>
        <begin position="262"/>
        <end position="282"/>
    </location>
</feature>
<feature type="transmembrane region" description="Helical" evidence="1">
    <location>
        <begin position="304"/>
        <end position="324"/>
    </location>
</feature>
<feature type="transmembrane region" description="Helical" evidence="1">
    <location>
        <begin position="341"/>
        <end position="361"/>
    </location>
</feature>
<feature type="transmembrane region" description="Helical" evidence="1">
    <location>
        <begin position="382"/>
        <end position="402"/>
    </location>
</feature>
<feature type="transmembrane region" description="Helical" evidence="1">
    <location>
        <begin position="429"/>
        <end position="449"/>
    </location>
</feature>
<feature type="region of interest" description="Disordered" evidence="2">
    <location>
        <begin position="489"/>
        <end position="513"/>
    </location>
</feature>
<feature type="compositionally biased region" description="Basic and acidic residues" evidence="2">
    <location>
        <begin position="501"/>
        <end position="513"/>
    </location>
</feature>
<protein>
    <recommendedName>
        <fullName>Uncharacterized membrane protein YfkQ</fullName>
    </recommendedName>
</protein>
<evidence type="ECO:0000255" key="1"/>
<evidence type="ECO:0000256" key="2">
    <source>
        <dbReference type="SAM" id="MobiDB-lite"/>
    </source>
</evidence>
<evidence type="ECO:0000305" key="3"/>
<keyword id="KW-1003">Cell membrane</keyword>
<keyword id="KW-0472">Membrane</keyword>
<keyword id="KW-1185">Reference proteome</keyword>
<keyword id="KW-0812">Transmembrane</keyword>
<keyword id="KW-1133">Transmembrane helix</keyword>
<reference key="1">
    <citation type="journal article" date="1997" name="Gene">
        <title>Cloning and sequencing of a 35.7 kb in the 70 degree-73 degree region of the Bacillus subtilis genome reveal genes for a new two-component system, three spore germination proteins, an iron uptake system and a general stress response protein.</title>
        <authorList>
            <person name="Yamamoto H."/>
            <person name="Uchiyama S."/>
            <person name="Nugroho F.A."/>
            <person name="Sekiguchi J."/>
        </authorList>
    </citation>
    <scope>NUCLEOTIDE SEQUENCE [GENOMIC DNA]</scope>
    <source>
        <strain>168 / AC327</strain>
    </source>
</reference>
<reference key="2">
    <citation type="journal article" date="1997" name="Nature">
        <title>The complete genome sequence of the Gram-positive bacterium Bacillus subtilis.</title>
        <authorList>
            <person name="Kunst F."/>
            <person name="Ogasawara N."/>
            <person name="Moszer I."/>
            <person name="Albertini A.M."/>
            <person name="Alloni G."/>
            <person name="Azevedo V."/>
            <person name="Bertero M.G."/>
            <person name="Bessieres P."/>
            <person name="Bolotin A."/>
            <person name="Borchert S."/>
            <person name="Borriss R."/>
            <person name="Boursier L."/>
            <person name="Brans A."/>
            <person name="Braun M."/>
            <person name="Brignell S.C."/>
            <person name="Bron S."/>
            <person name="Brouillet S."/>
            <person name="Bruschi C.V."/>
            <person name="Caldwell B."/>
            <person name="Capuano V."/>
            <person name="Carter N.M."/>
            <person name="Choi S.-K."/>
            <person name="Codani J.-J."/>
            <person name="Connerton I.F."/>
            <person name="Cummings N.J."/>
            <person name="Daniel R.A."/>
            <person name="Denizot F."/>
            <person name="Devine K.M."/>
            <person name="Duesterhoeft A."/>
            <person name="Ehrlich S.D."/>
            <person name="Emmerson P.T."/>
            <person name="Entian K.-D."/>
            <person name="Errington J."/>
            <person name="Fabret C."/>
            <person name="Ferrari E."/>
            <person name="Foulger D."/>
            <person name="Fritz C."/>
            <person name="Fujita M."/>
            <person name="Fujita Y."/>
            <person name="Fuma S."/>
            <person name="Galizzi A."/>
            <person name="Galleron N."/>
            <person name="Ghim S.-Y."/>
            <person name="Glaser P."/>
            <person name="Goffeau A."/>
            <person name="Golightly E.J."/>
            <person name="Grandi G."/>
            <person name="Guiseppi G."/>
            <person name="Guy B.J."/>
            <person name="Haga K."/>
            <person name="Haiech J."/>
            <person name="Harwood C.R."/>
            <person name="Henaut A."/>
            <person name="Hilbert H."/>
            <person name="Holsappel S."/>
            <person name="Hosono S."/>
            <person name="Hullo M.-F."/>
            <person name="Itaya M."/>
            <person name="Jones L.-M."/>
            <person name="Joris B."/>
            <person name="Karamata D."/>
            <person name="Kasahara Y."/>
            <person name="Klaerr-Blanchard M."/>
            <person name="Klein C."/>
            <person name="Kobayashi Y."/>
            <person name="Koetter P."/>
            <person name="Koningstein G."/>
            <person name="Krogh S."/>
            <person name="Kumano M."/>
            <person name="Kurita K."/>
            <person name="Lapidus A."/>
            <person name="Lardinois S."/>
            <person name="Lauber J."/>
            <person name="Lazarevic V."/>
            <person name="Lee S.-M."/>
            <person name="Levine A."/>
            <person name="Liu H."/>
            <person name="Masuda S."/>
            <person name="Mauel C."/>
            <person name="Medigue C."/>
            <person name="Medina N."/>
            <person name="Mellado R.P."/>
            <person name="Mizuno M."/>
            <person name="Moestl D."/>
            <person name="Nakai S."/>
            <person name="Noback M."/>
            <person name="Noone D."/>
            <person name="O'Reilly M."/>
            <person name="Ogawa K."/>
            <person name="Ogiwara A."/>
            <person name="Oudega B."/>
            <person name="Park S.-H."/>
            <person name="Parro V."/>
            <person name="Pohl T.M."/>
            <person name="Portetelle D."/>
            <person name="Porwollik S."/>
            <person name="Prescott A.M."/>
            <person name="Presecan E."/>
            <person name="Pujic P."/>
            <person name="Purnelle B."/>
            <person name="Rapoport G."/>
            <person name="Rey M."/>
            <person name="Reynolds S."/>
            <person name="Rieger M."/>
            <person name="Rivolta C."/>
            <person name="Rocha E."/>
            <person name="Roche B."/>
            <person name="Rose M."/>
            <person name="Sadaie Y."/>
            <person name="Sato T."/>
            <person name="Scanlan E."/>
            <person name="Schleich S."/>
            <person name="Schroeter R."/>
            <person name="Scoffone F."/>
            <person name="Sekiguchi J."/>
            <person name="Sekowska A."/>
            <person name="Seror S.J."/>
            <person name="Serror P."/>
            <person name="Shin B.-S."/>
            <person name="Soldo B."/>
            <person name="Sorokin A."/>
            <person name="Tacconi E."/>
            <person name="Takagi T."/>
            <person name="Takahashi H."/>
            <person name="Takemaru K."/>
            <person name="Takeuchi M."/>
            <person name="Tamakoshi A."/>
            <person name="Tanaka T."/>
            <person name="Terpstra P."/>
            <person name="Tognoni A."/>
            <person name="Tosato V."/>
            <person name="Uchiyama S."/>
            <person name="Vandenbol M."/>
            <person name="Vannier F."/>
            <person name="Vassarotti A."/>
            <person name="Viari A."/>
            <person name="Wambutt R."/>
            <person name="Wedler E."/>
            <person name="Wedler H."/>
            <person name="Weitzenegger T."/>
            <person name="Winters P."/>
            <person name="Wipat A."/>
            <person name="Yamamoto H."/>
            <person name="Yamane K."/>
            <person name="Yasumoto K."/>
            <person name="Yata K."/>
            <person name="Yoshida K."/>
            <person name="Yoshikawa H.-F."/>
            <person name="Zumstein E."/>
            <person name="Yoshikawa H."/>
            <person name="Danchin A."/>
        </authorList>
    </citation>
    <scope>NUCLEOTIDE SEQUENCE [LARGE SCALE GENOMIC DNA]</scope>
    <source>
        <strain>168</strain>
    </source>
</reference>
<name>YFKQ_BACSU</name>
<dbReference type="EMBL" id="D86417">
    <property type="protein sequence ID" value="BAA22290.1"/>
    <property type="molecule type" value="Genomic_DNA"/>
</dbReference>
<dbReference type="EMBL" id="AL009126">
    <property type="protein sequence ID" value="CAB12608.1"/>
    <property type="molecule type" value="Genomic_DNA"/>
</dbReference>
<dbReference type="PIR" id="C69809">
    <property type="entry name" value="C69809"/>
</dbReference>
<dbReference type="RefSeq" id="NP_388660.1">
    <property type="nucleotide sequence ID" value="NC_000964.3"/>
</dbReference>
<dbReference type="RefSeq" id="WP_003233683.1">
    <property type="nucleotide sequence ID" value="NZ_OZ025638.1"/>
</dbReference>
<dbReference type="SMR" id="O34486"/>
<dbReference type="FunCoup" id="O34486">
    <property type="interactions" value="80"/>
</dbReference>
<dbReference type="STRING" id="224308.BSU07790"/>
<dbReference type="PaxDb" id="224308-BSU07790"/>
<dbReference type="EnsemblBacteria" id="CAB12608">
    <property type="protein sequence ID" value="CAB12608"/>
    <property type="gene ID" value="BSU_07790"/>
</dbReference>
<dbReference type="GeneID" id="939688"/>
<dbReference type="KEGG" id="bsu:BSU07790"/>
<dbReference type="PATRIC" id="fig|224308.179.peg.843"/>
<dbReference type="eggNOG" id="COG0697">
    <property type="taxonomic scope" value="Bacteria"/>
</dbReference>
<dbReference type="InParanoid" id="O34486"/>
<dbReference type="OrthoDB" id="9772630at2"/>
<dbReference type="PhylomeDB" id="O34486"/>
<dbReference type="BioCyc" id="BSUB:BSU07790-MONOMER"/>
<dbReference type="Proteomes" id="UP000001570">
    <property type="component" value="Chromosome"/>
</dbReference>
<dbReference type="GO" id="GO:0005886">
    <property type="term" value="C:plasma membrane"/>
    <property type="evidence" value="ECO:0007669"/>
    <property type="project" value="UniProtKB-SubCell"/>
</dbReference>
<dbReference type="GO" id="GO:0009847">
    <property type="term" value="P:spore germination"/>
    <property type="evidence" value="ECO:0007669"/>
    <property type="project" value="InterPro"/>
</dbReference>
<dbReference type="InterPro" id="IPR004995">
    <property type="entry name" value="Spore_Ger"/>
</dbReference>
<dbReference type="InterPro" id="IPR050768">
    <property type="entry name" value="UPF0353/GerABKA_families"/>
</dbReference>
<dbReference type="PANTHER" id="PTHR22550:SF5">
    <property type="entry name" value="LEUCINE ZIPPER PROTEIN 4"/>
    <property type="match status" value="1"/>
</dbReference>
<dbReference type="PANTHER" id="PTHR22550">
    <property type="entry name" value="SPORE GERMINATION PROTEIN"/>
    <property type="match status" value="1"/>
</dbReference>
<dbReference type="Pfam" id="PF03323">
    <property type="entry name" value="GerA"/>
    <property type="match status" value="1"/>
</dbReference>
<dbReference type="PIRSF" id="PIRSF005690">
    <property type="entry name" value="GerBA"/>
    <property type="match status" value="1"/>
</dbReference>
<proteinExistence type="inferred from homology"/>
<comment type="subcellular location">
    <subcellularLocation>
        <location evidence="3">Cell membrane</location>
        <topology evidence="3">Multi-pass membrane protein</topology>
    </subcellularLocation>
</comment>
<comment type="similarity">
    <text evidence="3">Belongs to the GerABKA family.</text>
</comment>